<dbReference type="EC" id="7.-.-.-" evidence="1"/>
<dbReference type="EMBL" id="CP000061">
    <property type="protein sequence ID" value="ABC65658.1"/>
    <property type="status" value="ALT_INIT"/>
    <property type="molecule type" value="Genomic_DNA"/>
</dbReference>
<dbReference type="RefSeq" id="WP_041639900.1">
    <property type="nucleotide sequence ID" value="NC_007716.1"/>
</dbReference>
<dbReference type="SMR" id="Q2NIT5"/>
<dbReference type="STRING" id="322098.AYWB_541"/>
<dbReference type="KEGG" id="ayw:AYWB_541"/>
<dbReference type="eggNOG" id="COG1122">
    <property type="taxonomic scope" value="Bacteria"/>
</dbReference>
<dbReference type="HOGENOM" id="CLU_000604_1_22_14"/>
<dbReference type="OrthoDB" id="9784332at2"/>
<dbReference type="Proteomes" id="UP000001934">
    <property type="component" value="Chromosome"/>
</dbReference>
<dbReference type="GO" id="GO:0043190">
    <property type="term" value="C:ATP-binding cassette (ABC) transporter complex"/>
    <property type="evidence" value="ECO:0007669"/>
    <property type="project" value="TreeGrafter"/>
</dbReference>
<dbReference type="GO" id="GO:0005524">
    <property type="term" value="F:ATP binding"/>
    <property type="evidence" value="ECO:0007669"/>
    <property type="project" value="UniProtKB-KW"/>
</dbReference>
<dbReference type="GO" id="GO:0016887">
    <property type="term" value="F:ATP hydrolysis activity"/>
    <property type="evidence" value="ECO:0007669"/>
    <property type="project" value="InterPro"/>
</dbReference>
<dbReference type="GO" id="GO:0042626">
    <property type="term" value="F:ATPase-coupled transmembrane transporter activity"/>
    <property type="evidence" value="ECO:0007669"/>
    <property type="project" value="TreeGrafter"/>
</dbReference>
<dbReference type="CDD" id="cd03225">
    <property type="entry name" value="ABC_cobalt_CbiO_domain1"/>
    <property type="match status" value="1"/>
</dbReference>
<dbReference type="FunFam" id="3.40.50.300:FF:000224">
    <property type="entry name" value="Energy-coupling factor transporter ATP-binding protein EcfA"/>
    <property type="match status" value="1"/>
</dbReference>
<dbReference type="Gene3D" id="3.40.50.300">
    <property type="entry name" value="P-loop containing nucleotide triphosphate hydrolases"/>
    <property type="match status" value="1"/>
</dbReference>
<dbReference type="InterPro" id="IPR003593">
    <property type="entry name" value="AAA+_ATPase"/>
</dbReference>
<dbReference type="InterPro" id="IPR003439">
    <property type="entry name" value="ABC_transporter-like_ATP-bd"/>
</dbReference>
<dbReference type="InterPro" id="IPR017871">
    <property type="entry name" value="ABC_transporter-like_CS"/>
</dbReference>
<dbReference type="InterPro" id="IPR015856">
    <property type="entry name" value="ABC_transpr_CbiO/EcfA_su"/>
</dbReference>
<dbReference type="InterPro" id="IPR050095">
    <property type="entry name" value="ECF_ABC_transporter_ATP-bd"/>
</dbReference>
<dbReference type="InterPro" id="IPR027417">
    <property type="entry name" value="P-loop_NTPase"/>
</dbReference>
<dbReference type="PANTHER" id="PTHR43553:SF24">
    <property type="entry name" value="ENERGY-COUPLING FACTOR TRANSPORTER ATP-BINDING PROTEIN ECFA1"/>
    <property type="match status" value="1"/>
</dbReference>
<dbReference type="PANTHER" id="PTHR43553">
    <property type="entry name" value="HEAVY METAL TRANSPORTER"/>
    <property type="match status" value="1"/>
</dbReference>
<dbReference type="Pfam" id="PF00005">
    <property type="entry name" value="ABC_tran"/>
    <property type="match status" value="1"/>
</dbReference>
<dbReference type="SMART" id="SM00382">
    <property type="entry name" value="AAA"/>
    <property type="match status" value="1"/>
</dbReference>
<dbReference type="SUPFAM" id="SSF52540">
    <property type="entry name" value="P-loop containing nucleoside triphosphate hydrolases"/>
    <property type="match status" value="1"/>
</dbReference>
<dbReference type="PROSITE" id="PS00211">
    <property type="entry name" value="ABC_TRANSPORTER_1"/>
    <property type="match status" value="1"/>
</dbReference>
<dbReference type="PROSITE" id="PS50893">
    <property type="entry name" value="ABC_TRANSPORTER_2"/>
    <property type="match status" value="1"/>
</dbReference>
<dbReference type="PROSITE" id="PS51246">
    <property type="entry name" value="CBIO"/>
    <property type="match status" value="1"/>
</dbReference>
<organism>
    <name type="scientific">Aster yellows witches'-broom phytoplasma (strain AYWB)</name>
    <dbReference type="NCBI Taxonomy" id="322098"/>
    <lineage>
        <taxon>Bacteria</taxon>
        <taxon>Bacillati</taxon>
        <taxon>Mycoplasmatota</taxon>
        <taxon>Mollicutes</taxon>
        <taxon>Acholeplasmatales</taxon>
        <taxon>Acholeplasmataceae</taxon>
        <taxon>Candidatus Phytoplasma</taxon>
        <taxon>16SrI (Aster yellows group)</taxon>
    </lineage>
</organism>
<comment type="function">
    <text evidence="1">ATP-binding (A) component of a common energy-coupling factor (ECF) ABC-transporter complex. Unlike classic ABC transporters this ECF transporter provides the energy necessary to transport a number of different substrates.</text>
</comment>
<comment type="subunit">
    <text evidence="1">Forms a stable energy-coupling factor (ECF) transporter complex composed of 2 membrane-embedded substrate-binding proteins (S component), 2 ATP-binding proteins (A component) and 2 transmembrane proteins (T component).</text>
</comment>
<comment type="subcellular location">
    <subcellularLocation>
        <location evidence="1">Cell membrane</location>
        <topology evidence="1">Peripheral membrane protein</topology>
    </subcellularLocation>
</comment>
<comment type="similarity">
    <text evidence="1">Belongs to the ABC transporter superfamily. Energy-coupling factor EcfA family.</text>
</comment>
<comment type="sequence caution" evidence="2">
    <conflict type="erroneous initiation">
        <sequence resource="EMBL-CDS" id="ABC65658"/>
    </conflict>
    <text>Extended N-terminus.</text>
</comment>
<reference key="1">
    <citation type="journal article" date="2006" name="J. Bacteriol.">
        <title>Living with genome instability: the adaptation of phytoplasmas to diverse environments of their insect and plant hosts.</title>
        <authorList>
            <person name="Bai X."/>
            <person name="Zhang J."/>
            <person name="Ewing A."/>
            <person name="Miller S.A."/>
            <person name="Jancso Radek A."/>
            <person name="Shevchenko D.V."/>
            <person name="Tsukerman K."/>
            <person name="Walunas T."/>
            <person name="Lapidus A."/>
            <person name="Campbell J.W."/>
            <person name="Hogenhout S.A."/>
        </authorList>
    </citation>
    <scope>NUCLEOTIDE SEQUENCE [LARGE SCALE GENOMIC DNA]</scope>
    <source>
        <strain>AYWB</strain>
    </source>
</reference>
<name>ECFA_AYWBP</name>
<sequence length="271" mass="30876">MISIQNLTFYYGCNPILKDINLTIQNNSWVSIVGHNGSGKSTLAKILLGLLAFNKGQIVIDNIVLNEKNLPILRPKIGIVFQNPDYQFTGLTVREDIAFGLENYNVCREEIIAKVLKYAKMVKIDDLLDKNVNQLSGGQKQRVTIASILAMEPEIIIFDEATSFLDPQGALEVQKIIQTIKNKILITITHDLDFASKSDEIIVLYQGKLITQRPPKNLLQDPLFLQQYKLTPPLSLQLYYEILKDSTTKKIKNNQMLENLKDILWQYNLKK</sequence>
<protein>
    <recommendedName>
        <fullName evidence="1">Energy-coupling factor transporter ATP-binding protein EcfA</fullName>
        <shortName evidence="1">ECF transporter A component EcfA</shortName>
        <ecNumber evidence="1">7.-.-.-</ecNumber>
    </recommendedName>
</protein>
<keyword id="KW-0067">ATP-binding</keyword>
<keyword id="KW-1003">Cell membrane</keyword>
<keyword id="KW-0472">Membrane</keyword>
<keyword id="KW-0547">Nucleotide-binding</keyword>
<keyword id="KW-1278">Translocase</keyword>
<keyword id="KW-0813">Transport</keyword>
<gene>
    <name evidence="1" type="primary">ecfA</name>
    <name type="synonym">cbiO</name>
    <name type="ordered locus">AYWB_541</name>
</gene>
<accession>Q2NIT5</accession>
<feature type="chain" id="PRO_0000287920" description="Energy-coupling factor transporter ATP-binding protein EcfA">
    <location>
        <begin position="1"/>
        <end position="271"/>
    </location>
</feature>
<feature type="domain" description="ABC transporter" evidence="1">
    <location>
        <begin position="2"/>
        <end position="231"/>
    </location>
</feature>
<feature type="binding site" evidence="1">
    <location>
        <begin position="34"/>
        <end position="41"/>
    </location>
    <ligand>
        <name>ATP</name>
        <dbReference type="ChEBI" id="CHEBI:30616"/>
    </ligand>
</feature>
<evidence type="ECO:0000255" key="1">
    <source>
        <dbReference type="HAMAP-Rule" id="MF_01710"/>
    </source>
</evidence>
<evidence type="ECO:0000305" key="2"/>
<proteinExistence type="inferred from homology"/>